<keyword id="KW-0001">2Fe-2S</keyword>
<keyword id="KW-0997">Cell inner membrane</keyword>
<keyword id="KW-1003">Cell membrane</keyword>
<keyword id="KW-0274">FAD</keyword>
<keyword id="KW-0285">Flavoprotein</keyword>
<keyword id="KW-0406">Ion transport</keyword>
<keyword id="KW-0408">Iron</keyword>
<keyword id="KW-0411">Iron-sulfur</keyword>
<keyword id="KW-0472">Membrane</keyword>
<keyword id="KW-0479">Metal-binding</keyword>
<keyword id="KW-0520">NAD</keyword>
<keyword id="KW-0915">Sodium</keyword>
<keyword id="KW-0739">Sodium transport</keyword>
<keyword id="KW-1278">Translocase</keyword>
<keyword id="KW-0812">Transmembrane</keyword>
<keyword id="KW-1133">Transmembrane helix</keyword>
<keyword id="KW-0813">Transport</keyword>
<keyword id="KW-0830">Ubiquinone</keyword>
<evidence type="ECO:0000255" key="1">
    <source>
        <dbReference type="HAMAP-Rule" id="MF_00430"/>
    </source>
</evidence>
<sequence>MEIILGVVMFTLIVLALTVMILFAKSKLVNTGDITVEINEDEDKSFTAPAGDKLLNMLSSHGIFVSSACGGGGSCGQCRVTIKEGGGDILPTELSHISKREAKEGCRLACQVNVKQNLKIELPEEIFGVKKWTCEVISNDNKATFIKELKLKIPDGDVVPFRAGGFIQIEAEPHTVKYADFDVPTEYRGDWDKFNLFRFESVVTEPTVRAYSMANYPEEHGIILLNVRIATPPPSVPDAPPGIMSSYIWSLKPGDKVVISGPFGEFFAKDTDAEMVFIGGGAGMAPMRSHIFDQLKRLHSKRKISFWYGARSRREMFYEEDFDQLQAENDNFRWHVALSDPQPEDNWTGYTGFIHNVLLENYLKDHPAPEDCEFYMCGPPMMNAAVIKMLKDLGVEDENIMLDDFGG</sequence>
<feature type="chain" id="PRO_1000080598" description="Na(+)-translocating NADH-quinone reductase subunit F">
    <location>
        <begin position="1"/>
        <end position="407"/>
    </location>
</feature>
<feature type="transmembrane region" description="Helical" evidence="1">
    <location>
        <begin position="3"/>
        <end position="23"/>
    </location>
</feature>
<feature type="domain" description="2Fe-2S ferredoxin-type" evidence="1">
    <location>
        <begin position="32"/>
        <end position="126"/>
    </location>
</feature>
<feature type="domain" description="FAD-binding FR-type" evidence="1">
    <location>
        <begin position="129"/>
        <end position="269"/>
    </location>
</feature>
<feature type="binding site" evidence="1">
    <location>
        <position position="69"/>
    </location>
    <ligand>
        <name>[2Fe-2S] cluster</name>
        <dbReference type="ChEBI" id="CHEBI:190135"/>
    </ligand>
</feature>
<feature type="binding site" evidence="1">
    <location>
        <position position="75"/>
    </location>
    <ligand>
        <name>[2Fe-2S] cluster</name>
        <dbReference type="ChEBI" id="CHEBI:190135"/>
    </ligand>
</feature>
<feature type="binding site" evidence="1">
    <location>
        <position position="78"/>
    </location>
    <ligand>
        <name>[2Fe-2S] cluster</name>
        <dbReference type="ChEBI" id="CHEBI:190135"/>
    </ligand>
</feature>
<feature type="binding site" evidence="1">
    <location>
        <position position="110"/>
    </location>
    <ligand>
        <name>[2Fe-2S] cluster</name>
        <dbReference type="ChEBI" id="CHEBI:190135"/>
    </ligand>
</feature>
<proteinExistence type="inferred from homology"/>
<reference key="1">
    <citation type="journal article" date="2006" name="J. Bacteriol.">
        <title>Complete genome sequence of Yersinia pestis strains Antiqua and Nepal516: evidence of gene reduction in an emerging pathogen.</title>
        <authorList>
            <person name="Chain P.S.G."/>
            <person name="Hu P."/>
            <person name="Malfatti S.A."/>
            <person name="Radnedge L."/>
            <person name="Larimer F."/>
            <person name="Vergez L.M."/>
            <person name="Worsham P."/>
            <person name="Chu M.C."/>
            <person name="Andersen G.L."/>
        </authorList>
    </citation>
    <scope>NUCLEOTIDE SEQUENCE [LARGE SCALE GENOMIC DNA]</scope>
    <source>
        <strain>Antiqua</strain>
    </source>
</reference>
<comment type="function">
    <text evidence="1">NQR complex catalyzes the reduction of ubiquinone-1 to ubiquinol by two successive reactions, coupled with the transport of Na(+) ions from the cytoplasm to the periplasm. The first step is catalyzed by NqrF, which accepts electrons from NADH and reduces ubiquinone-1 to ubisemiquinone by a one-electron transfer pathway.</text>
</comment>
<comment type="catalytic activity">
    <reaction evidence="1">
        <text>a ubiquinone + n Na(+)(in) + NADH + H(+) = a ubiquinol + n Na(+)(out) + NAD(+)</text>
        <dbReference type="Rhea" id="RHEA:47748"/>
        <dbReference type="Rhea" id="RHEA-COMP:9565"/>
        <dbReference type="Rhea" id="RHEA-COMP:9566"/>
        <dbReference type="ChEBI" id="CHEBI:15378"/>
        <dbReference type="ChEBI" id="CHEBI:16389"/>
        <dbReference type="ChEBI" id="CHEBI:17976"/>
        <dbReference type="ChEBI" id="CHEBI:29101"/>
        <dbReference type="ChEBI" id="CHEBI:57540"/>
        <dbReference type="ChEBI" id="CHEBI:57945"/>
        <dbReference type="EC" id="7.2.1.1"/>
    </reaction>
</comment>
<comment type="cofactor">
    <cofactor evidence="1">
        <name>[2Fe-2S] cluster</name>
        <dbReference type="ChEBI" id="CHEBI:190135"/>
    </cofactor>
    <text evidence="1">Binds 1 [2Fe-2S] cluster.</text>
</comment>
<comment type="cofactor">
    <cofactor evidence="1">
        <name>FAD</name>
        <dbReference type="ChEBI" id="CHEBI:57692"/>
    </cofactor>
</comment>
<comment type="subunit">
    <text evidence="1">Composed of six subunits; NqrA, NqrB, NqrC, NqrD, NqrE and NqrF.</text>
</comment>
<comment type="subcellular location">
    <subcellularLocation>
        <location evidence="1">Cell inner membrane</location>
        <topology evidence="1">Single-pass membrane protein</topology>
    </subcellularLocation>
</comment>
<comment type="similarity">
    <text evidence="1">Belongs to the NqrF family.</text>
</comment>
<dbReference type="EC" id="7.2.1.1" evidence="1"/>
<dbReference type="EMBL" id="CP000308">
    <property type="protein sequence ID" value="ABG14687.1"/>
    <property type="molecule type" value="Genomic_DNA"/>
</dbReference>
<dbReference type="RefSeq" id="WP_002208711.1">
    <property type="nucleotide sequence ID" value="NZ_CP009906.1"/>
</dbReference>
<dbReference type="SMR" id="Q1C4D5"/>
<dbReference type="GeneID" id="57975484"/>
<dbReference type="KEGG" id="ypa:YPA_2725"/>
<dbReference type="Proteomes" id="UP000001971">
    <property type="component" value="Chromosome"/>
</dbReference>
<dbReference type="GO" id="GO:0005886">
    <property type="term" value="C:plasma membrane"/>
    <property type="evidence" value="ECO:0007669"/>
    <property type="project" value="UniProtKB-SubCell"/>
</dbReference>
<dbReference type="GO" id="GO:0051537">
    <property type="term" value="F:2 iron, 2 sulfur cluster binding"/>
    <property type="evidence" value="ECO:0007669"/>
    <property type="project" value="UniProtKB-KW"/>
</dbReference>
<dbReference type="GO" id="GO:0009055">
    <property type="term" value="F:electron transfer activity"/>
    <property type="evidence" value="ECO:0007669"/>
    <property type="project" value="UniProtKB-UniRule"/>
</dbReference>
<dbReference type="GO" id="GO:0046872">
    <property type="term" value="F:metal ion binding"/>
    <property type="evidence" value="ECO:0007669"/>
    <property type="project" value="UniProtKB-KW"/>
</dbReference>
<dbReference type="GO" id="GO:0016655">
    <property type="term" value="F:oxidoreductase activity, acting on NAD(P)H, quinone or similar compound as acceptor"/>
    <property type="evidence" value="ECO:0007669"/>
    <property type="project" value="InterPro"/>
</dbReference>
<dbReference type="GO" id="GO:0006814">
    <property type="term" value="P:sodium ion transport"/>
    <property type="evidence" value="ECO:0007669"/>
    <property type="project" value="UniProtKB-UniRule"/>
</dbReference>
<dbReference type="CDD" id="cd06188">
    <property type="entry name" value="NADH_quinone_reductase"/>
    <property type="match status" value="1"/>
</dbReference>
<dbReference type="FunFam" id="3.40.50.80:FF:000014">
    <property type="entry name" value="Na(+)-translocating NADH-quinone reductase subunit F"/>
    <property type="match status" value="1"/>
</dbReference>
<dbReference type="Gene3D" id="3.10.20.30">
    <property type="match status" value="1"/>
</dbReference>
<dbReference type="Gene3D" id="3.40.50.80">
    <property type="entry name" value="Nucleotide-binding domain of ferredoxin-NADP reductase (FNR) module"/>
    <property type="match status" value="1"/>
</dbReference>
<dbReference type="Gene3D" id="2.40.30.10">
    <property type="entry name" value="Translation factors"/>
    <property type="match status" value="1"/>
</dbReference>
<dbReference type="HAMAP" id="MF_00430">
    <property type="entry name" value="NqrF"/>
    <property type="match status" value="1"/>
</dbReference>
<dbReference type="InterPro" id="IPR036010">
    <property type="entry name" value="2Fe-2S_ferredoxin-like_sf"/>
</dbReference>
<dbReference type="InterPro" id="IPR001041">
    <property type="entry name" value="2Fe-2S_ferredoxin-type"/>
</dbReference>
<dbReference type="InterPro" id="IPR012675">
    <property type="entry name" value="Beta-grasp_dom_sf"/>
</dbReference>
<dbReference type="InterPro" id="IPR008333">
    <property type="entry name" value="Cbr1-like_FAD-bd_dom"/>
</dbReference>
<dbReference type="InterPro" id="IPR017927">
    <property type="entry name" value="FAD-bd_FR_type"/>
</dbReference>
<dbReference type="InterPro" id="IPR001709">
    <property type="entry name" value="Flavoprot_Pyr_Nucl_cyt_Rdtase"/>
</dbReference>
<dbReference type="InterPro" id="IPR039261">
    <property type="entry name" value="FNR_nucleotide-bd"/>
</dbReference>
<dbReference type="InterPro" id="IPR010205">
    <property type="entry name" value="NqrF"/>
</dbReference>
<dbReference type="InterPro" id="IPR001433">
    <property type="entry name" value="OxRdtase_FAD/NAD-bd"/>
</dbReference>
<dbReference type="InterPro" id="IPR017938">
    <property type="entry name" value="Riboflavin_synthase-like_b-brl"/>
</dbReference>
<dbReference type="NCBIfam" id="TIGR01941">
    <property type="entry name" value="nqrF"/>
    <property type="match status" value="1"/>
</dbReference>
<dbReference type="PANTHER" id="PTHR43644">
    <property type="entry name" value="NA(+)-TRANSLOCATING NADH-QUINONE REDUCTASE SUBUNIT"/>
    <property type="match status" value="1"/>
</dbReference>
<dbReference type="PANTHER" id="PTHR43644:SF1">
    <property type="entry name" value="NAD(P)H-FLAVIN REDUCTASE"/>
    <property type="match status" value="1"/>
</dbReference>
<dbReference type="Pfam" id="PF00970">
    <property type="entry name" value="FAD_binding_6"/>
    <property type="match status" value="1"/>
</dbReference>
<dbReference type="Pfam" id="PF00111">
    <property type="entry name" value="Fer2"/>
    <property type="match status" value="1"/>
</dbReference>
<dbReference type="Pfam" id="PF00175">
    <property type="entry name" value="NAD_binding_1"/>
    <property type="match status" value="1"/>
</dbReference>
<dbReference type="PIRSF" id="PIRSF000044">
    <property type="entry name" value="Cis_Diol_DH_RD"/>
    <property type="match status" value="1"/>
</dbReference>
<dbReference type="PRINTS" id="PR00371">
    <property type="entry name" value="FPNCR"/>
</dbReference>
<dbReference type="SUPFAM" id="SSF54292">
    <property type="entry name" value="2Fe-2S ferredoxin-like"/>
    <property type="match status" value="1"/>
</dbReference>
<dbReference type="SUPFAM" id="SSF52343">
    <property type="entry name" value="Ferredoxin reductase-like, C-terminal NADP-linked domain"/>
    <property type="match status" value="1"/>
</dbReference>
<dbReference type="SUPFAM" id="SSF63380">
    <property type="entry name" value="Riboflavin synthase domain-like"/>
    <property type="match status" value="1"/>
</dbReference>
<dbReference type="PROSITE" id="PS51085">
    <property type="entry name" value="2FE2S_FER_2"/>
    <property type="match status" value="1"/>
</dbReference>
<dbReference type="PROSITE" id="PS51384">
    <property type="entry name" value="FAD_FR"/>
    <property type="match status" value="1"/>
</dbReference>
<accession>Q1C4D5</accession>
<organism>
    <name type="scientific">Yersinia pestis bv. Antiqua (strain Antiqua)</name>
    <dbReference type="NCBI Taxonomy" id="360102"/>
    <lineage>
        <taxon>Bacteria</taxon>
        <taxon>Pseudomonadati</taxon>
        <taxon>Pseudomonadota</taxon>
        <taxon>Gammaproteobacteria</taxon>
        <taxon>Enterobacterales</taxon>
        <taxon>Yersiniaceae</taxon>
        <taxon>Yersinia</taxon>
    </lineage>
</organism>
<protein>
    <recommendedName>
        <fullName evidence="1">Na(+)-translocating NADH-quinone reductase subunit F</fullName>
        <shortName evidence="1">Na(+)-NQR subunit F</shortName>
        <shortName evidence="1">Na(+)-translocating NQR subunit F</shortName>
        <ecNumber evidence="1">7.2.1.1</ecNumber>
    </recommendedName>
    <alternativeName>
        <fullName evidence="1">NQR complex subunit F</fullName>
    </alternativeName>
    <alternativeName>
        <fullName evidence="1">NQR-1 subunit F</fullName>
    </alternativeName>
</protein>
<gene>
    <name evidence="1" type="primary">nqrF</name>
    <name type="ordered locus">YPA_2725</name>
</gene>
<name>NQRF_YERPA</name>